<keyword id="KW-0028">Amino-acid biosynthesis</keyword>
<keyword id="KW-0057">Aromatic amino acid biosynthesis</keyword>
<keyword id="KW-0210">Decarboxylase</keyword>
<keyword id="KW-0456">Lyase</keyword>
<keyword id="KW-0822">Tryptophan biosynthesis</keyword>
<dbReference type="EC" id="4.1.1.48" evidence="1"/>
<dbReference type="EMBL" id="FM242711">
    <property type="protein sequence ID" value="CAS05402.1"/>
    <property type="molecule type" value="Genomic_DNA"/>
</dbReference>
<dbReference type="RefSeq" id="WP_010958923.1">
    <property type="nucleotide sequence ID" value="NC_012488.1"/>
</dbReference>
<dbReference type="SMR" id="C1KVS7"/>
<dbReference type="KEGG" id="lmc:Lm4b_01641"/>
<dbReference type="HOGENOM" id="CLU_034247_2_1_9"/>
<dbReference type="UniPathway" id="UPA00035">
    <property type="reaction ID" value="UER00043"/>
</dbReference>
<dbReference type="GO" id="GO:0004425">
    <property type="term" value="F:indole-3-glycerol-phosphate synthase activity"/>
    <property type="evidence" value="ECO:0007669"/>
    <property type="project" value="UniProtKB-UniRule"/>
</dbReference>
<dbReference type="GO" id="GO:0004640">
    <property type="term" value="F:phosphoribosylanthranilate isomerase activity"/>
    <property type="evidence" value="ECO:0007669"/>
    <property type="project" value="TreeGrafter"/>
</dbReference>
<dbReference type="GO" id="GO:0000162">
    <property type="term" value="P:L-tryptophan biosynthetic process"/>
    <property type="evidence" value="ECO:0007669"/>
    <property type="project" value="UniProtKB-UniRule"/>
</dbReference>
<dbReference type="CDD" id="cd00331">
    <property type="entry name" value="IGPS"/>
    <property type="match status" value="1"/>
</dbReference>
<dbReference type="FunFam" id="3.20.20.70:FF:000024">
    <property type="entry name" value="Indole-3-glycerol phosphate synthase"/>
    <property type="match status" value="1"/>
</dbReference>
<dbReference type="Gene3D" id="3.20.20.70">
    <property type="entry name" value="Aldolase class I"/>
    <property type="match status" value="1"/>
</dbReference>
<dbReference type="HAMAP" id="MF_00134_B">
    <property type="entry name" value="IGPS_B"/>
    <property type="match status" value="1"/>
</dbReference>
<dbReference type="InterPro" id="IPR013785">
    <property type="entry name" value="Aldolase_TIM"/>
</dbReference>
<dbReference type="InterPro" id="IPR045186">
    <property type="entry name" value="Indole-3-glycerol_P_synth"/>
</dbReference>
<dbReference type="InterPro" id="IPR013798">
    <property type="entry name" value="Indole-3-glycerol_P_synth_dom"/>
</dbReference>
<dbReference type="InterPro" id="IPR001468">
    <property type="entry name" value="Indole-3-GlycerolPSynthase_CS"/>
</dbReference>
<dbReference type="InterPro" id="IPR011060">
    <property type="entry name" value="RibuloseP-bd_barrel"/>
</dbReference>
<dbReference type="NCBIfam" id="NF001371">
    <property type="entry name" value="PRK00278.1-3"/>
    <property type="match status" value="1"/>
</dbReference>
<dbReference type="NCBIfam" id="NF001377">
    <property type="entry name" value="PRK00278.2-4"/>
    <property type="match status" value="1"/>
</dbReference>
<dbReference type="PANTHER" id="PTHR22854:SF2">
    <property type="entry name" value="INDOLE-3-GLYCEROL-PHOSPHATE SYNTHASE"/>
    <property type="match status" value="1"/>
</dbReference>
<dbReference type="PANTHER" id="PTHR22854">
    <property type="entry name" value="TRYPTOPHAN BIOSYNTHESIS PROTEIN"/>
    <property type="match status" value="1"/>
</dbReference>
<dbReference type="Pfam" id="PF00218">
    <property type="entry name" value="IGPS"/>
    <property type="match status" value="1"/>
</dbReference>
<dbReference type="SUPFAM" id="SSF51366">
    <property type="entry name" value="Ribulose-phoshate binding barrel"/>
    <property type="match status" value="1"/>
</dbReference>
<dbReference type="PROSITE" id="PS00614">
    <property type="entry name" value="IGPS"/>
    <property type="match status" value="1"/>
</dbReference>
<accession>C1KVS7</accession>
<gene>
    <name evidence="1" type="primary">trpC</name>
    <name type="ordered locus">Lm4b_01641</name>
</gene>
<reference key="1">
    <citation type="journal article" date="2012" name="BMC Genomics">
        <title>Comparative genomics and transcriptomics of lineages I, II, and III strains of Listeria monocytogenes.</title>
        <authorList>
            <person name="Hain T."/>
            <person name="Ghai R."/>
            <person name="Billion A."/>
            <person name="Kuenne C.T."/>
            <person name="Steinweg C."/>
            <person name="Izar B."/>
            <person name="Mohamed W."/>
            <person name="Mraheil M."/>
            <person name="Domann E."/>
            <person name="Schaffrath S."/>
            <person name="Karst U."/>
            <person name="Goesmann A."/>
            <person name="Oehm S."/>
            <person name="Puhler A."/>
            <person name="Merkl R."/>
            <person name="Vorwerk S."/>
            <person name="Glaser P."/>
            <person name="Garrido P."/>
            <person name="Rusniok C."/>
            <person name="Buchrieser C."/>
            <person name="Goebel W."/>
            <person name="Chakraborty T."/>
        </authorList>
    </citation>
    <scope>NUCLEOTIDE SEQUENCE [LARGE SCALE GENOMIC DNA]</scope>
    <source>
        <strain>CLIP80459</strain>
    </source>
</reference>
<sequence>MTFLEEILAQKAVEVADMPLEKVAEKRKTYSFYEFLKANTSTMQLIAEVKRASPSKGEINMGVNPVLQAKSYQAAGAGMISVLTDPVFFKGSIEDLREVAKNVEIPVLCKDFIISEKQLIRARNAGATVVLLIISALTEEMLIALFEQALALDLEVLVEVHDQKELAVAQKIGAKLIGVNNRNLHTFEVDIAVSERLASDFSSDACFISESGFRTAEDVARVSQKYNAVLVGEALMREATPEAAAKSLKVTR</sequence>
<feature type="chain" id="PRO_1000203202" description="Indole-3-glycerol phosphate synthase">
    <location>
        <begin position="1"/>
        <end position="252"/>
    </location>
</feature>
<comment type="catalytic activity">
    <reaction evidence="1">
        <text>1-(2-carboxyphenylamino)-1-deoxy-D-ribulose 5-phosphate + H(+) = (1S,2R)-1-C-(indol-3-yl)glycerol 3-phosphate + CO2 + H2O</text>
        <dbReference type="Rhea" id="RHEA:23476"/>
        <dbReference type="ChEBI" id="CHEBI:15377"/>
        <dbReference type="ChEBI" id="CHEBI:15378"/>
        <dbReference type="ChEBI" id="CHEBI:16526"/>
        <dbReference type="ChEBI" id="CHEBI:58613"/>
        <dbReference type="ChEBI" id="CHEBI:58866"/>
        <dbReference type="EC" id="4.1.1.48"/>
    </reaction>
</comment>
<comment type="pathway">
    <text evidence="1">Amino-acid biosynthesis; L-tryptophan biosynthesis; L-tryptophan from chorismate: step 4/5.</text>
</comment>
<comment type="similarity">
    <text evidence="1">Belongs to the TrpC family.</text>
</comment>
<protein>
    <recommendedName>
        <fullName evidence="1">Indole-3-glycerol phosphate synthase</fullName>
        <shortName evidence="1">IGPS</shortName>
        <ecNumber evidence="1">4.1.1.48</ecNumber>
    </recommendedName>
</protein>
<name>TRPC_LISMC</name>
<evidence type="ECO:0000255" key="1">
    <source>
        <dbReference type="HAMAP-Rule" id="MF_00134"/>
    </source>
</evidence>
<organism>
    <name type="scientific">Listeria monocytogenes serotype 4b (strain CLIP80459)</name>
    <dbReference type="NCBI Taxonomy" id="568819"/>
    <lineage>
        <taxon>Bacteria</taxon>
        <taxon>Bacillati</taxon>
        <taxon>Bacillota</taxon>
        <taxon>Bacilli</taxon>
        <taxon>Bacillales</taxon>
        <taxon>Listeriaceae</taxon>
        <taxon>Listeria</taxon>
    </lineage>
</organism>
<proteinExistence type="inferred from homology"/>